<feature type="chain" id="PRO_0000462356" description="Echinocystic acid 23-monooxygenase">
    <location>
        <begin position="1"/>
        <end position="522"/>
    </location>
</feature>
<feature type="transmembrane region" description="Helical; Signal-anchor for type II membrane protein" evidence="2">
    <location>
        <begin position="4"/>
        <end position="24"/>
    </location>
</feature>
<feature type="binding site" description="axial binding residue" evidence="1">
    <location>
        <position position="470"/>
    </location>
    <ligand>
        <name>heme</name>
        <dbReference type="ChEBI" id="CHEBI:30413"/>
    </ligand>
    <ligandPart>
        <name>Fe</name>
        <dbReference type="ChEBI" id="CHEBI:18248"/>
    </ligandPart>
</feature>
<feature type="glycosylation site" description="N-linked (GlcNAc...) asparagine" evidence="3">
    <location>
        <position position="190"/>
    </location>
</feature>
<proteinExistence type="evidence at protein level"/>
<gene>
    <name evidence="5" type="primary">CYP72A984</name>
    <name evidence="5" type="synonym">Saoffv11042705m</name>
    <name evidence="7" type="ORF">RND81_08G155300</name>
</gene>
<organism>
    <name type="scientific">Saponaria officinalis</name>
    <name type="common">Common soapwort</name>
    <name type="synonym">Lychnis saponaria</name>
    <dbReference type="NCBI Taxonomy" id="3572"/>
    <lineage>
        <taxon>Eukaryota</taxon>
        <taxon>Viridiplantae</taxon>
        <taxon>Streptophyta</taxon>
        <taxon>Embryophyta</taxon>
        <taxon>Tracheophyta</taxon>
        <taxon>Spermatophyta</taxon>
        <taxon>Magnoliopsida</taxon>
        <taxon>eudicotyledons</taxon>
        <taxon>Gunneridae</taxon>
        <taxon>Pentapetalae</taxon>
        <taxon>Caryophyllales</taxon>
        <taxon>Caryophyllaceae</taxon>
        <taxon>Caryophylleae</taxon>
        <taxon>Saponaria</taxon>
    </lineage>
</organism>
<protein>
    <recommendedName>
        <fullName evidence="6">Echinocystic acid 23-monooxygenase</fullName>
        <ecNumber evidence="4">1.14.14.-</ecNumber>
    </recommendedName>
    <alternativeName>
        <fullName evidence="5">Cytochrome P450 72A984</fullName>
        <shortName evidence="5">SoCYP72A984</shortName>
    </alternativeName>
</protein>
<name>C7284_SAPOF</name>
<keyword id="KW-0175">Coiled coil</keyword>
<keyword id="KW-0325">Glycoprotein</keyword>
<keyword id="KW-0349">Heme</keyword>
<keyword id="KW-0408">Iron</keyword>
<keyword id="KW-0472">Membrane</keyword>
<keyword id="KW-0479">Metal-binding</keyword>
<keyword id="KW-0503">Monooxygenase</keyword>
<keyword id="KW-0560">Oxidoreductase</keyword>
<keyword id="KW-0735">Signal-anchor</keyword>
<keyword id="KW-0812">Transmembrane</keyword>
<keyword id="KW-1133">Transmembrane helix</keyword>
<dbReference type="EC" id="1.14.14.-" evidence="4"/>
<dbReference type="EMBL" id="OR426401">
    <property type="protein sequence ID" value="WWM48154.1"/>
    <property type="molecule type" value="mRNA"/>
</dbReference>
<dbReference type="EMBL" id="JBDFQZ010000008">
    <property type="protein sequence ID" value="KAK9699133.1"/>
    <property type="molecule type" value="Genomic_DNA"/>
</dbReference>
<dbReference type="UniPathway" id="UPA00213"/>
<dbReference type="Proteomes" id="UP001443914">
    <property type="component" value="Unassembled WGS sequence"/>
</dbReference>
<dbReference type="GO" id="GO:0016020">
    <property type="term" value="C:membrane"/>
    <property type="evidence" value="ECO:0007669"/>
    <property type="project" value="UniProtKB-SubCell"/>
</dbReference>
<dbReference type="GO" id="GO:0020037">
    <property type="term" value="F:heme binding"/>
    <property type="evidence" value="ECO:0007669"/>
    <property type="project" value="InterPro"/>
</dbReference>
<dbReference type="GO" id="GO:0005506">
    <property type="term" value="F:iron ion binding"/>
    <property type="evidence" value="ECO:0007669"/>
    <property type="project" value="InterPro"/>
</dbReference>
<dbReference type="GO" id="GO:0004497">
    <property type="term" value="F:monooxygenase activity"/>
    <property type="evidence" value="ECO:0000314"/>
    <property type="project" value="UniProtKB"/>
</dbReference>
<dbReference type="GO" id="GO:0016705">
    <property type="term" value="F:oxidoreductase activity, acting on paired donors, with incorporation or reduction of molecular oxygen"/>
    <property type="evidence" value="ECO:0007669"/>
    <property type="project" value="InterPro"/>
</dbReference>
<dbReference type="GO" id="GO:0016135">
    <property type="term" value="P:saponin biosynthetic process"/>
    <property type="evidence" value="ECO:0000314"/>
    <property type="project" value="UniProtKB"/>
</dbReference>
<dbReference type="GO" id="GO:0016104">
    <property type="term" value="P:triterpenoid biosynthetic process"/>
    <property type="evidence" value="ECO:0000314"/>
    <property type="project" value="UniProtKB"/>
</dbReference>
<dbReference type="Gene3D" id="1.10.630.10">
    <property type="entry name" value="Cytochrome P450"/>
    <property type="match status" value="1"/>
</dbReference>
<dbReference type="InterPro" id="IPR001128">
    <property type="entry name" value="Cyt_P450"/>
</dbReference>
<dbReference type="InterPro" id="IPR017972">
    <property type="entry name" value="Cyt_P450_CS"/>
</dbReference>
<dbReference type="InterPro" id="IPR002401">
    <property type="entry name" value="Cyt_P450_E_grp-I"/>
</dbReference>
<dbReference type="InterPro" id="IPR036396">
    <property type="entry name" value="Cyt_P450_sf"/>
</dbReference>
<dbReference type="InterPro" id="IPR050665">
    <property type="entry name" value="Cytochrome_P450_Monooxygen"/>
</dbReference>
<dbReference type="PANTHER" id="PTHR24282:SF255">
    <property type="entry name" value="CYTOCHROME P450 72A11-RELATED"/>
    <property type="match status" value="1"/>
</dbReference>
<dbReference type="PANTHER" id="PTHR24282">
    <property type="entry name" value="CYTOCHROME P450 FAMILY MEMBER"/>
    <property type="match status" value="1"/>
</dbReference>
<dbReference type="Pfam" id="PF00067">
    <property type="entry name" value="p450"/>
    <property type="match status" value="1"/>
</dbReference>
<dbReference type="PRINTS" id="PR00463">
    <property type="entry name" value="EP450I"/>
</dbReference>
<dbReference type="PRINTS" id="PR00385">
    <property type="entry name" value="P450"/>
</dbReference>
<dbReference type="SUPFAM" id="SSF48264">
    <property type="entry name" value="Cytochrome P450"/>
    <property type="match status" value="1"/>
</dbReference>
<dbReference type="PROSITE" id="PS00086">
    <property type="entry name" value="CYTOCHROME_P450"/>
    <property type="match status" value="1"/>
</dbReference>
<comment type="function">
    <text evidence="4">Component of the oleanane-type triterpene saponins (e.g. saponarioside A and saponarioside B) biosynthetic pathway, leading to the production of natural products with detergent properties used as traditional sources of soap (PubMed:39043959). An oxidoreductase that facilitates the oxidation of the methyl group to a carboxyl group at the C-23 position of echinocystic acid, resulting in the formation of quillaic acid (QA) (PubMed:39043959).</text>
</comment>
<comment type="cofactor">
    <cofactor evidence="1">
        <name>heme</name>
        <dbReference type="ChEBI" id="CHEBI:30413"/>
    </cofactor>
</comment>
<comment type="pathway">
    <text evidence="4">Secondary metabolite biosynthesis; terpenoid biosynthesis.</text>
</comment>
<comment type="subcellular location">
    <subcellularLocation>
        <location evidence="2">Membrane</location>
        <topology evidence="2">Single-pass type II membrane protein</topology>
    </subcellularLocation>
</comment>
<comment type="tissue specificity">
    <text evidence="4">Mainly expressed in flowers and flower buds, to a lesser extent in young leaves and, at low levels, in old leaves, stems and roots.</text>
</comment>
<comment type="biotechnology">
    <text evidence="5">Soapwort saponins possess anticancer properties and are also being explored as enhancers for endosomal escape in targeted tumor therapies (PubMed:39043959). They may also serve as precursors for vaccine adjuvants (PubMed:39043959).</text>
</comment>
<comment type="similarity">
    <text evidence="6">Belongs to the cytochrome P450 family.</text>
</comment>
<accession>A0AAW1J8D7</accession>
<sequence length="522" mass="59477">MEYLPYIATSIACIVILRWALNMMQWLWFEPRRLEKLLRKQGLQGNSYKFLFGDMKESSMLRNEALAKPMPMPFDNDYFPRINPFVDQLLNKYGMNCFLWMGPVPAIQIGEPELVREAFNRMHEFQKPKTNPLSALLATGLVSYEGDKWAKHRRLINPSFHVEKLKLMIPAFRESIVEVVNQWEKKVPENGSAEIDVWPSLTSLTGDVISRAAFGSVYGDGRRIFELLAVQKELVLSLLKFSYIPGYTYLPTEGNKKMKAVNNEIQRLLENVIQNRKKAMEAGEAAKDDLLGLLMDSNYKESMLEGGGKNKKLIMSFQDLIDECKLFFLAGHETTAVLLVWTLILLCKHQDWQTKAREEVLATFGMSEPTDYDALNRLKIVTMILNEVLRLYPPVVSTNRKLFKGETKLGNLVIPPGVGISLLTIQANRDPKVWGEDASEFRPDRFAEGLVKATKGNVAFFPFGWGPRICIGQNFALTESKMAVAMILQRFTFDLSPSYTHAPSGLITLNPQYGAPLMFRRR</sequence>
<reference evidence="8" key="1">
    <citation type="journal article" date="2025" name="Nat. Chem. Biol.">
        <title>Unlocking saponin biosynthesis in soapwort.</title>
        <authorList>
            <person name="Jo S."/>
            <person name="El-Demerdash A."/>
            <person name="Owen C."/>
            <person name="Srivastava V."/>
            <person name="Wu D."/>
            <person name="Kikuchi S."/>
            <person name="Reed J."/>
            <person name="Hodgson H."/>
            <person name="Harkess A."/>
            <person name="Shu S."/>
            <person name="Plott C."/>
            <person name="Jenkins J."/>
            <person name="Williams M."/>
            <person name="Boston L.-B."/>
            <person name="Lacchini E."/>
            <person name="Qu T."/>
            <person name="Goossens A."/>
            <person name="Grimwood J."/>
            <person name="Schmutz J."/>
            <person name="Leebens-Mack J."/>
            <person name="Osbourn A."/>
        </authorList>
    </citation>
    <scope>NUCLEOTIDE SEQUENCE [MRNA]</scope>
    <scope>FUNCTION</scope>
    <scope>CATALYTIC ACTIVITY</scope>
    <scope>TISSUE SPECIFICITY</scope>
    <scope>PATHWAY</scope>
    <scope>BIOTECHNOLOGY</scope>
</reference>
<reference evidence="7" key="2">
    <citation type="submission" date="2024-03" db="EMBL/GenBank/DDBJ databases">
        <title>WGS assembly of Saponaria officinalis var. Norfolk2.</title>
        <authorList>
            <person name="Jenkins J."/>
            <person name="Shu S."/>
            <person name="Grimwood J."/>
            <person name="Barry K."/>
            <person name="Goodstein D."/>
            <person name="Schmutz J."/>
            <person name="Leebens-Mack J."/>
            <person name="Osbourn A."/>
        </authorList>
    </citation>
    <scope>NUCLEOTIDE SEQUENCE [LARGE SCALE GENOMIC DNA]</scope>
    <source>
        <strain>cv. Norfolk2</strain>
        <tissue>Leaf</tissue>
    </source>
</reference>
<evidence type="ECO:0000250" key="1">
    <source>
        <dbReference type="UniProtKB" id="Q94IP1"/>
    </source>
</evidence>
<evidence type="ECO:0000255" key="2"/>
<evidence type="ECO:0000255" key="3">
    <source>
        <dbReference type="PROSITE-ProRule" id="PRU00498"/>
    </source>
</evidence>
<evidence type="ECO:0000269" key="4">
    <source>
    </source>
</evidence>
<evidence type="ECO:0000303" key="5">
    <source>
    </source>
</evidence>
<evidence type="ECO:0000305" key="6"/>
<evidence type="ECO:0000312" key="7">
    <source>
        <dbReference type="EMBL" id="KAK9699133.1"/>
    </source>
</evidence>
<evidence type="ECO:0000312" key="8">
    <source>
        <dbReference type="EMBL" id="WWM48154.1"/>
    </source>
</evidence>